<feature type="chain" id="PRO_0000174550" description="S-adenosylmethionine synthase">
    <location>
        <begin position="1"/>
        <end position="383"/>
    </location>
</feature>
<feature type="region of interest" description="Flexible loop" evidence="1">
    <location>
        <begin position="99"/>
        <end position="109"/>
    </location>
</feature>
<feature type="binding site" description="in other chain" evidence="1">
    <location>
        <position position="22"/>
    </location>
    <ligand>
        <name>ATP</name>
        <dbReference type="ChEBI" id="CHEBI:30616"/>
        <note>ligand shared between two neighboring subunits</note>
    </ligand>
</feature>
<feature type="binding site" evidence="1">
    <location>
        <position position="24"/>
    </location>
    <ligand>
        <name>Mg(2+)</name>
        <dbReference type="ChEBI" id="CHEBI:18420"/>
    </ligand>
</feature>
<feature type="binding site" evidence="1">
    <location>
        <position position="50"/>
    </location>
    <ligand>
        <name>K(+)</name>
        <dbReference type="ChEBI" id="CHEBI:29103"/>
    </ligand>
</feature>
<feature type="binding site" description="in other chain" evidence="1">
    <location>
        <position position="63"/>
    </location>
    <ligand>
        <name>L-methionine</name>
        <dbReference type="ChEBI" id="CHEBI:57844"/>
        <note>ligand shared between two neighboring subunits</note>
    </ligand>
</feature>
<feature type="binding site" description="in other chain" evidence="1">
    <location>
        <position position="99"/>
    </location>
    <ligand>
        <name>L-methionine</name>
        <dbReference type="ChEBI" id="CHEBI:57844"/>
        <note>ligand shared between two neighboring subunits</note>
    </ligand>
</feature>
<feature type="binding site" description="in other chain" evidence="1">
    <location>
        <begin position="160"/>
        <end position="162"/>
    </location>
    <ligand>
        <name>ATP</name>
        <dbReference type="ChEBI" id="CHEBI:30616"/>
        <note>ligand shared between two neighboring subunits</note>
    </ligand>
</feature>
<feature type="binding site" evidence="1">
    <location>
        <position position="235"/>
    </location>
    <ligand>
        <name>ATP</name>
        <dbReference type="ChEBI" id="CHEBI:30616"/>
        <note>ligand shared between two neighboring subunits</note>
    </ligand>
</feature>
<feature type="binding site" evidence="1">
    <location>
        <position position="235"/>
    </location>
    <ligand>
        <name>L-methionine</name>
        <dbReference type="ChEBI" id="CHEBI:57844"/>
        <note>ligand shared between two neighboring subunits</note>
    </ligand>
</feature>
<feature type="binding site" description="in other chain" evidence="1">
    <location>
        <begin position="241"/>
        <end position="242"/>
    </location>
    <ligand>
        <name>ATP</name>
        <dbReference type="ChEBI" id="CHEBI:30616"/>
        <note>ligand shared between two neighboring subunits</note>
    </ligand>
</feature>
<feature type="binding site" evidence="1">
    <location>
        <position position="258"/>
    </location>
    <ligand>
        <name>ATP</name>
        <dbReference type="ChEBI" id="CHEBI:30616"/>
        <note>ligand shared between two neighboring subunits</note>
    </ligand>
</feature>
<feature type="binding site" evidence="1">
    <location>
        <position position="262"/>
    </location>
    <ligand>
        <name>ATP</name>
        <dbReference type="ChEBI" id="CHEBI:30616"/>
        <note>ligand shared between two neighboring subunits</note>
    </ligand>
</feature>
<feature type="binding site" description="in other chain" evidence="1">
    <location>
        <position position="266"/>
    </location>
    <ligand>
        <name>L-methionine</name>
        <dbReference type="ChEBI" id="CHEBI:57844"/>
        <note>ligand shared between two neighboring subunits</note>
    </ligand>
</feature>
<evidence type="ECO:0000255" key="1">
    <source>
        <dbReference type="HAMAP-Rule" id="MF_00086"/>
    </source>
</evidence>
<keyword id="KW-0067">ATP-binding</keyword>
<keyword id="KW-0963">Cytoplasm</keyword>
<keyword id="KW-0460">Magnesium</keyword>
<keyword id="KW-0479">Metal-binding</keyword>
<keyword id="KW-0547">Nucleotide-binding</keyword>
<keyword id="KW-0554">One-carbon metabolism</keyword>
<keyword id="KW-0630">Potassium</keyword>
<keyword id="KW-1185">Reference proteome</keyword>
<keyword id="KW-0808">Transferase</keyword>
<name>METK_MYCGE</name>
<sequence length="383" mass="42716">MAIRIKSTRVGRFVSESVGLGHPDKICDQIADSILDQCLLQSKTSHVACEVFASKNLILIGGEISTSGYVDVVQTAWRILRNLGYNETDFSFLSCINNQSLEINQAVLKNNEINAGDQGITVGYAVNETKQLMPLGVLLAHSFLKQAEKLTKQFDFLKNDMKSQVVLNYSLNQVECEEVLLSIQHTNAISLTELRKVIENNVILPVLNQYGFQDKKPTCLVNPGGSFVLGGPMADTGLTGRKIIVDTYGPYAHHGGGSFSGKDPSKVDRTGAYFARFIAKHIVSLGWASECEVSISWVFSKPNPQSITVKCFNTNIQYDEVLINRVVNNYFNWSITKIIDKLKLLDFVKYSDYAVYGHFGNDLSPWEQPTELDKLECLIKNFH</sequence>
<dbReference type="EC" id="2.5.1.6" evidence="1"/>
<dbReference type="EMBL" id="L43967">
    <property type="protein sequence ID" value="AAC71263.1"/>
    <property type="molecule type" value="Genomic_DNA"/>
</dbReference>
<dbReference type="EMBL" id="U02123">
    <property type="protein sequence ID" value="AAD12398.1"/>
    <property type="molecule type" value="Genomic_DNA"/>
</dbReference>
<dbReference type="PIR" id="B64205">
    <property type="entry name" value="B64205"/>
</dbReference>
<dbReference type="RefSeq" id="WP_009885709.1">
    <property type="nucleotide sequence ID" value="NC_000908.2"/>
</dbReference>
<dbReference type="SMR" id="P47293"/>
<dbReference type="FunCoup" id="P47293">
    <property type="interactions" value="184"/>
</dbReference>
<dbReference type="STRING" id="243273.MG_047"/>
<dbReference type="GeneID" id="88282162"/>
<dbReference type="KEGG" id="mge:MG_047"/>
<dbReference type="eggNOG" id="COG0192">
    <property type="taxonomic scope" value="Bacteria"/>
</dbReference>
<dbReference type="HOGENOM" id="CLU_041802_1_1_14"/>
<dbReference type="InParanoid" id="P47293"/>
<dbReference type="OrthoDB" id="9801686at2"/>
<dbReference type="BioCyc" id="MGEN243273:G1GJ2-47-MONOMER"/>
<dbReference type="UniPathway" id="UPA00315">
    <property type="reaction ID" value="UER00080"/>
</dbReference>
<dbReference type="Proteomes" id="UP000000807">
    <property type="component" value="Chromosome"/>
</dbReference>
<dbReference type="GO" id="GO:0005829">
    <property type="term" value="C:cytosol"/>
    <property type="evidence" value="ECO:0000318"/>
    <property type="project" value="GO_Central"/>
</dbReference>
<dbReference type="GO" id="GO:0005524">
    <property type="term" value="F:ATP binding"/>
    <property type="evidence" value="ECO:0007669"/>
    <property type="project" value="UniProtKB-UniRule"/>
</dbReference>
<dbReference type="GO" id="GO:0000287">
    <property type="term" value="F:magnesium ion binding"/>
    <property type="evidence" value="ECO:0007669"/>
    <property type="project" value="UniProtKB-UniRule"/>
</dbReference>
<dbReference type="GO" id="GO:0004478">
    <property type="term" value="F:methionine adenosyltransferase activity"/>
    <property type="evidence" value="ECO:0000318"/>
    <property type="project" value="GO_Central"/>
</dbReference>
<dbReference type="GO" id="GO:0006730">
    <property type="term" value="P:one-carbon metabolic process"/>
    <property type="evidence" value="ECO:0007669"/>
    <property type="project" value="UniProtKB-KW"/>
</dbReference>
<dbReference type="GO" id="GO:0006556">
    <property type="term" value="P:S-adenosylmethionine biosynthetic process"/>
    <property type="evidence" value="ECO:0000318"/>
    <property type="project" value="GO_Central"/>
</dbReference>
<dbReference type="CDD" id="cd18079">
    <property type="entry name" value="S-AdoMet_synt"/>
    <property type="match status" value="1"/>
</dbReference>
<dbReference type="Gene3D" id="3.30.300.10">
    <property type="match status" value="3"/>
</dbReference>
<dbReference type="HAMAP" id="MF_00086">
    <property type="entry name" value="S_AdoMet_synth1"/>
    <property type="match status" value="1"/>
</dbReference>
<dbReference type="InterPro" id="IPR022631">
    <property type="entry name" value="ADOMET_SYNTHASE_CS"/>
</dbReference>
<dbReference type="InterPro" id="IPR022630">
    <property type="entry name" value="S-AdoMet_synt_C"/>
</dbReference>
<dbReference type="InterPro" id="IPR022629">
    <property type="entry name" value="S-AdoMet_synt_central"/>
</dbReference>
<dbReference type="InterPro" id="IPR022628">
    <property type="entry name" value="S-AdoMet_synt_N"/>
</dbReference>
<dbReference type="InterPro" id="IPR002133">
    <property type="entry name" value="S-AdoMet_synthetase"/>
</dbReference>
<dbReference type="InterPro" id="IPR022636">
    <property type="entry name" value="S-AdoMet_synthetase_sfam"/>
</dbReference>
<dbReference type="NCBIfam" id="TIGR01034">
    <property type="entry name" value="metK"/>
    <property type="match status" value="1"/>
</dbReference>
<dbReference type="PANTHER" id="PTHR11964">
    <property type="entry name" value="S-ADENOSYLMETHIONINE SYNTHETASE"/>
    <property type="match status" value="1"/>
</dbReference>
<dbReference type="Pfam" id="PF02773">
    <property type="entry name" value="S-AdoMet_synt_C"/>
    <property type="match status" value="1"/>
</dbReference>
<dbReference type="Pfam" id="PF02772">
    <property type="entry name" value="S-AdoMet_synt_M"/>
    <property type="match status" value="1"/>
</dbReference>
<dbReference type="Pfam" id="PF00438">
    <property type="entry name" value="S-AdoMet_synt_N"/>
    <property type="match status" value="1"/>
</dbReference>
<dbReference type="PIRSF" id="PIRSF000497">
    <property type="entry name" value="MAT"/>
    <property type="match status" value="1"/>
</dbReference>
<dbReference type="SUPFAM" id="SSF55973">
    <property type="entry name" value="S-adenosylmethionine synthetase"/>
    <property type="match status" value="3"/>
</dbReference>
<dbReference type="PROSITE" id="PS00376">
    <property type="entry name" value="ADOMET_SYNTHASE_1"/>
    <property type="match status" value="1"/>
</dbReference>
<dbReference type="PROSITE" id="PS00377">
    <property type="entry name" value="ADOMET_SYNTHASE_2"/>
    <property type="match status" value="1"/>
</dbReference>
<gene>
    <name evidence="1" type="primary">metK</name>
    <name type="synonym">metX</name>
    <name type="ordered locus">MG047</name>
</gene>
<accession>P47293</accession>
<comment type="function">
    <text evidence="1">Catalyzes the formation of S-adenosylmethionine (AdoMet) from methionine and ATP. The overall synthetic reaction is composed of two sequential steps, AdoMet formation and the subsequent tripolyphosphate hydrolysis which occurs prior to release of AdoMet from the enzyme.</text>
</comment>
<comment type="catalytic activity">
    <reaction evidence="1">
        <text>L-methionine + ATP + H2O = S-adenosyl-L-methionine + phosphate + diphosphate</text>
        <dbReference type="Rhea" id="RHEA:21080"/>
        <dbReference type="ChEBI" id="CHEBI:15377"/>
        <dbReference type="ChEBI" id="CHEBI:30616"/>
        <dbReference type="ChEBI" id="CHEBI:33019"/>
        <dbReference type="ChEBI" id="CHEBI:43474"/>
        <dbReference type="ChEBI" id="CHEBI:57844"/>
        <dbReference type="ChEBI" id="CHEBI:59789"/>
        <dbReference type="EC" id="2.5.1.6"/>
    </reaction>
</comment>
<comment type="cofactor">
    <cofactor evidence="1">
        <name>Mg(2+)</name>
        <dbReference type="ChEBI" id="CHEBI:18420"/>
    </cofactor>
    <text evidence="1">Binds 2 divalent ions per subunit.</text>
</comment>
<comment type="cofactor">
    <cofactor evidence="1">
        <name>K(+)</name>
        <dbReference type="ChEBI" id="CHEBI:29103"/>
    </cofactor>
    <text evidence="1">Binds 1 potassium ion per subunit.</text>
</comment>
<comment type="pathway">
    <text evidence="1">Amino-acid biosynthesis; S-adenosyl-L-methionine biosynthesis; S-adenosyl-L-methionine from L-methionine: step 1/1.</text>
</comment>
<comment type="subunit">
    <text evidence="1">Homotetramer; dimer of dimers.</text>
</comment>
<comment type="subcellular location">
    <subcellularLocation>
        <location evidence="1">Cytoplasm</location>
    </subcellularLocation>
</comment>
<comment type="similarity">
    <text evidence="1">Belongs to the AdoMet synthase family.</text>
</comment>
<proteinExistence type="inferred from homology"/>
<organism>
    <name type="scientific">Mycoplasma genitalium (strain ATCC 33530 / DSM 19775 / NCTC 10195 / G37)</name>
    <name type="common">Mycoplasmoides genitalium</name>
    <dbReference type="NCBI Taxonomy" id="243273"/>
    <lineage>
        <taxon>Bacteria</taxon>
        <taxon>Bacillati</taxon>
        <taxon>Mycoplasmatota</taxon>
        <taxon>Mycoplasmoidales</taxon>
        <taxon>Mycoplasmoidaceae</taxon>
        <taxon>Mycoplasmoides</taxon>
    </lineage>
</organism>
<reference key="1">
    <citation type="journal article" date="1995" name="Science">
        <title>The minimal gene complement of Mycoplasma genitalium.</title>
        <authorList>
            <person name="Fraser C.M."/>
            <person name="Gocayne J.D."/>
            <person name="White O."/>
            <person name="Adams M.D."/>
            <person name="Clayton R.A."/>
            <person name="Fleischmann R.D."/>
            <person name="Bult C.J."/>
            <person name="Kerlavage A.R."/>
            <person name="Sutton G.G."/>
            <person name="Kelley J.M."/>
            <person name="Fritchman J.L."/>
            <person name="Weidman J.F."/>
            <person name="Small K.V."/>
            <person name="Sandusky M."/>
            <person name="Fuhrmann J.L."/>
            <person name="Nguyen D.T."/>
            <person name="Utterback T.R."/>
            <person name="Saudek D.M."/>
            <person name="Phillips C.A."/>
            <person name="Merrick J.M."/>
            <person name="Tomb J.-F."/>
            <person name="Dougherty B.A."/>
            <person name="Bott K.F."/>
            <person name="Hu P.-C."/>
            <person name="Lucier T.S."/>
            <person name="Peterson S.N."/>
            <person name="Smith H.O."/>
            <person name="Hutchison C.A. III"/>
            <person name="Venter J.C."/>
        </authorList>
    </citation>
    <scope>NUCLEOTIDE SEQUENCE [LARGE SCALE GENOMIC DNA]</scope>
    <source>
        <strain>ATCC 33530 / DSM 19775 / NCTC 10195 / G37</strain>
    </source>
</reference>
<reference key="2">
    <citation type="journal article" date="1993" name="J. Bacteriol.">
        <title>A survey of the Mycoplasma genitalium genome by using random sequencing.</title>
        <authorList>
            <person name="Peterson S.N."/>
            <person name="Hu P.-C."/>
            <person name="Bott K.F."/>
            <person name="Hutchison C.A. III"/>
        </authorList>
    </citation>
    <scope>NUCLEOTIDE SEQUENCE [GENOMIC DNA] OF 263-357</scope>
    <source>
        <strain>ATCC 33530 / DSM 19775 / NCTC 10195 / G37</strain>
    </source>
</reference>
<protein>
    <recommendedName>
        <fullName evidence="1">S-adenosylmethionine synthase</fullName>
        <shortName evidence="1">AdoMet synthase</shortName>
        <ecNumber evidence="1">2.5.1.6</ecNumber>
    </recommendedName>
    <alternativeName>
        <fullName evidence="1">MAT</fullName>
    </alternativeName>
    <alternativeName>
        <fullName evidence="1">Methionine adenosyltransferase</fullName>
    </alternativeName>
</protein>